<reference key="1">
    <citation type="journal article" date="2009" name="Genome Res.">
        <title>Comparative genomics of protoploid Saccharomycetaceae.</title>
        <authorList>
            <consortium name="The Genolevures Consortium"/>
            <person name="Souciet J.-L."/>
            <person name="Dujon B."/>
            <person name="Gaillardin C."/>
            <person name="Johnston M."/>
            <person name="Baret P.V."/>
            <person name="Cliften P."/>
            <person name="Sherman D.J."/>
            <person name="Weissenbach J."/>
            <person name="Westhof E."/>
            <person name="Wincker P."/>
            <person name="Jubin C."/>
            <person name="Poulain J."/>
            <person name="Barbe V."/>
            <person name="Segurens B."/>
            <person name="Artiguenave F."/>
            <person name="Anthouard V."/>
            <person name="Vacherie B."/>
            <person name="Val M.-E."/>
            <person name="Fulton R.S."/>
            <person name="Minx P."/>
            <person name="Wilson R."/>
            <person name="Durrens P."/>
            <person name="Jean G."/>
            <person name="Marck C."/>
            <person name="Martin T."/>
            <person name="Nikolski M."/>
            <person name="Rolland T."/>
            <person name="Seret M.-L."/>
            <person name="Casaregola S."/>
            <person name="Despons L."/>
            <person name="Fairhead C."/>
            <person name="Fischer G."/>
            <person name="Lafontaine I."/>
            <person name="Leh V."/>
            <person name="Lemaire M."/>
            <person name="de Montigny J."/>
            <person name="Neuveglise C."/>
            <person name="Thierry A."/>
            <person name="Blanc-Lenfle I."/>
            <person name="Bleykasten C."/>
            <person name="Diffels J."/>
            <person name="Fritsch E."/>
            <person name="Frangeul L."/>
            <person name="Goeffon A."/>
            <person name="Jauniaux N."/>
            <person name="Kachouri-Lafond R."/>
            <person name="Payen C."/>
            <person name="Potier S."/>
            <person name="Pribylova L."/>
            <person name="Ozanne C."/>
            <person name="Richard G.-F."/>
            <person name="Sacerdot C."/>
            <person name="Straub M.-L."/>
            <person name="Talla E."/>
        </authorList>
    </citation>
    <scope>NUCLEOTIDE SEQUENCE [LARGE SCALE GENOMIC DNA]</scope>
    <source>
        <strain>ATCC 56472 / CBS 6340 / NRRL Y-8284</strain>
    </source>
</reference>
<gene>
    <name evidence="1" type="primary">GET3</name>
    <name type="ordered locus">KLTH0F10098g</name>
</gene>
<feature type="chain" id="PRO_0000388210" description="ATPase GET3">
    <location>
        <begin position="1"/>
        <end position="349"/>
    </location>
</feature>
<feature type="active site" evidence="1">
    <location>
        <position position="57"/>
    </location>
</feature>
<feature type="binding site" evidence="1">
    <location>
        <begin position="26"/>
        <end position="33"/>
    </location>
    <ligand>
        <name>ATP</name>
        <dbReference type="ChEBI" id="CHEBI:30616"/>
    </ligand>
</feature>
<feature type="binding site" evidence="1">
    <location>
        <position position="240"/>
    </location>
    <ligand>
        <name>ATP</name>
        <dbReference type="ChEBI" id="CHEBI:30616"/>
    </ligand>
</feature>
<feature type="binding site" evidence="1">
    <location>
        <position position="267"/>
    </location>
    <ligand>
        <name>ATP</name>
        <dbReference type="ChEBI" id="CHEBI:30616"/>
    </ligand>
</feature>
<feature type="binding site" evidence="1">
    <location>
        <position position="280"/>
    </location>
    <ligand>
        <name>Zn(2+)</name>
        <dbReference type="ChEBI" id="CHEBI:29105"/>
        <note>ligand shared between dimeric partners</note>
    </ligand>
</feature>
<feature type="binding site" evidence="1">
    <location>
        <position position="283"/>
    </location>
    <ligand>
        <name>Zn(2+)</name>
        <dbReference type="ChEBI" id="CHEBI:29105"/>
        <note>ligand shared between dimeric partners</note>
    </ligand>
</feature>
<evidence type="ECO:0000255" key="1">
    <source>
        <dbReference type="HAMAP-Rule" id="MF_03112"/>
    </source>
</evidence>
<protein>
    <recommendedName>
        <fullName evidence="1">ATPase GET3</fullName>
        <ecNumber evidence="1">3.6.-.-</ecNumber>
    </recommendedName>
    <alternativeName>
        <fullName evidence="1">Arsenical pump-driving ATPase</fullName>
    </alternativeName>
    <alternativeName>
        <fullName evidence="1">Arsenite-stimulated ATPase</fullName>
    </alternativeName>
    <alternativeName>
        <fullName evidence="1">Golgi to ER traffic protein 3</fullName>
    </alternativeName>
    <alternativeName>
        <fullName evidence="1">Guided entry of tail-anchored proteins 3</fullName>
    </alternativeName>
</protein>
<proteinExistence type="inferred from homology"/>
<accession>C5DL53</accession>
<organism>
    <name type="scientific">Lachancea thermotolerans (strain ATCC 56472 / CBS 6340 / NRRL Y-8284)</name>
    <name type="common">Yeast</name>
    <name type="synonym">Kluyveromyces thermotolerans</name>
    <dbReference type="NCBI Taxonomy" id="559295"/>
    <lineage>
        <taxon>Eukaryota</taxon>
        <taxon>Fungi</taxon>
        <taxon>Dikarya</taxon>
        <taxon>Ascomycota</taxon>
        <taxon>Saccharomycotina</taxon>
        <taxon>Saccharomycetes</taxon>
        <taxon>Saccharomycetales</taxon>
        <taxon>Saccharomycetaceae</taxon>
        <taxon>Lachancea</taxon>
    </lineage>
</organism>
<dbReference type="EC" id="3.6.-.-" evidence="1"/>
<dbReference type="EMBL" id="CU928170">
    <property type="protein sequence ID" value="CAR24204.1"/>
    <property type="molecule type" value="Genomic_DNA"/>
</dbReference>
<dbReference type="RefSeq" id="XP_002554641.1">
    <property type="nucleotide sequence ID" value="XM_002554595.1"/>
</dbReference>
<dbReference type="SMR" id="C5DL53"/>
<dbReference type="FunCoup" id="C5DL53">
    <property type="interactions" value="1032"/>
</dbReference>
<dbReference type="STRING" id="559295.C5DL53"/>
<dbReference type="GeneID" id="8292851"/>
<dbReference type="KEGG" id="lth:KLTH0F10098g"/>
<dbReference type="eggNOG" id="KOG2825">
    <property type="taxonomic scope" value="Eukaryota"/>
</dbReference>
<dbReference type="HOGENOM" id="CLU_040761_0_0_1"/>
<dbReference type="InParanoid" id="C5DL53"/>
<dbReference type="OMA" id="MDAPYEF"/>
<dbReference type="OrthoDB" id="1770at2759"/>
<dbReference type="Proteomes" id="UP000002036">
    <property type="component" value="Chromosome F"/>
</dbReference>
<dbReference type="GO" id="GO:0043529">
    <property type="term" value="C:GET complex"/>
    <property type="evidence" value="ECO:0007669"/>
    <property type="project" value="TreeGrafter"/>
</dbReference>
<dbReference type="GO" id="GO:0005794">
    <property type="term" value="C:Golgi apparatus"/>
    <property type="evidence" value="ECO:0007669"/>
    <property type="project" value="UniProtKB-SubCell"/>
</dbReference>
<dbReference type="GO" id="GO:0005524">
    <property type="term" value="F:ATP binding"/>
    <property type="evidence" value="ECO:0007669"/>
    <property type="project" value="UniProtKB-UniRule"/>
</dbReference>
<dbReference type="GO" id="GO:0016887">
    <property type="term" value="F:ATP hydrolysis activity"/>
    <property type="evidence" value="ECO:0007669"/>
    <property type="project" value="InterPro"/>
</dbReference>
<dbReference type="GO" id="GO:0046872">
    <property type="term" value="F:metal ion binding"/>
    <property type="evidence" value="ECO:0007669"/>
    <property type="project" value="UniProtKB-KW"/>
</dbReference>
<dbReference type="GO" id="GO:0071816">
    <property type="term" value="P:tail-anchored membrane protein insertion into ER membrane"/>
    <property type="evidence" value="ECO:0007669"/>
    <property type="project" value="TreeGrafter"/>
</dbReference>
<dbReference type="CDD" id="cd02035">
    <property type="entry name" value="ArsA"/>
    <property type="match status" value="1"/>
</dbReference>
<dbReference type="FunFam" id="3.40.50.300:FF:001359">
    <property type="entry name" value="ATPase GET3"/>
    <property type="match status" value="1"/>
</dbReference>
<dbReference type="Gene3D" id="3.40.50.300">
    <property type="entry name" value="P-loop containing nucleotide triphosphate hydrolases"/>
    <property type="match status" value="1"/>
</dbReference>
<dbReference type="HAMAP" id="MF_03112">
    <property type="entry name" value="Asna1_Get3"/>
    <property type="match status" value="1"/>
</dbReference>
<dbReference type="InterPro" id="IPR025723">
    <property type="entry name" value="Anion-transp_ATPase-like_dom"/>
</dbReference>
<dbReference type="InterPro" id="IPR016300">
    <property type="entry name" value="ATPase_ArsA/GET3"/>
</dbReference>
<dbReference type="InterPro" id="IPR027542">
    <property type="entry name" value="ATPase_ArsA/GET3_euk"/>
</dbReference>
<dbReference type="InterPro" id="IPR027417">
    <property type="entry name" value="P-loop_NTPase"/>
</dbReference>
<dbReference type="NCBIfam" id="TIGR00345">
    <property type="entry name" value="GET3_arsA_TRC40"/>
    <property type="match status" value="1"/>
</dbReference>
<dbReference type="PANTHER" id="PTHR10803">
    <property type="entry name" value="ARSENICAL PUMP-DRIVING ATPASE ARSENITE-TRANSLOCATING ATPASE"/>
    <property type="match status" value="1"/>
</dbReference>
<dbReference type="PANTHER" id="PTHR10803:SF3">
    <property type="entry name" value="ATPASE GET3"/>
    <property type="match status" value="1"/>
</dbReference>
<dbReference type="Pfam" id="PF02374">
    <property type="entry name" value="ArsA_ATPase"/>
    <property type="match status" value="1"/>
</dbReference>
<dbReference type="SUPFAM" id="SSF52540">
    <property type="entry name" value="P-loop containing nucleoside triphosphate hydrolases"/>
    <property type="match status" value="1"/>
</dbReference>
<name>GET3_LACTC</name>
<comment type="function">
    <text evidence="1">ATPase required for the post-translational delivery of tail-anchored (TA) proteins to the endoplasmic reticulum. Recognizes and selectively binds the transmembrane domain of TA proteins in the cytosol. This complex then targets to the endoplasmic reticulum by membrane-bound receptors GET1 and GET2, where the tail-anchored protein is released for insertion. This process is regulated by ATP binding and hydrolysis. ATP binding drives the homodimer towards the closed dimer state, facilitating recognition of newly synthesized TA membrane proteins. ATP hydrolysis is required for insertion. Subsequently, the homodimer reverts towards the open dimer state, lowering its affinity for the GET1-GET2 receptor, and returning it to the cytosol to initiate a new round of targeting. Cooperates with the HDEL receptor ERD2 to mediate the ATP-dependent retrieval of resident ER proteins that contain a C-terminal H-D-E-L retention signal from the Golgi to the ER. Involved in low-level resistance to the oxyanions arsenite and arsenate, and in heat tolerance.</text>
</comment>
<comment type="subunit">
    <text evidence="1">Homodimer. Component of the Golgi to ER traffic (GET) complex, which is composed of GET1, GET2 and GET3. Within the complex, GET1 and GET2 form a heterotetramer which is stabilized by phosphatidylinositol binding and which binds to the GET3 homodimer. Interacts with the chloride channel protein GEF1.</text>
</comment>
<comment type="subcellular location">
    <subcellularLocation>
        <location evidence="1">Cytoplasm</location>
    </subcellularLocation>
    <subcellularLocation>
        <location evidence="1">Endoplasmic reticulum</location>
    </subcellularLocation>
    <subcellularLocation>
        <location evidence="1">Golgi apparatus</location>
    </subcellularLocation>
    <text evidence="1">GET1 and GET2 are required for targeting GET3 to the endoplasmic reticulum.</text>
</comment>
<comment type="similarity">
    <text evidence="1">Belongs to the arsA ATPase family.</text>
</comment>
<keyword id="KW-0067">ATP-binding</keyword>
<keyword id="KW-0963">Cytoplasm</keyword>
<keyword id="KW-0256">Endoplasmic reticulum</keyword>
<keyword id="KW-0333">Golgi apparatus</keyword>
<keyword id="KW-0378">Hydrolase</keyword>
<keyword id="KW-0479">Metal-binding</keyword>
<keyword id="KW-0547">Nucleotide-binding</keyword>
<keyword id="KW-1185">Reference proteome</keyword>
<keyword id="KW-0813">Transport</keyword>
<keyword id="KW-0862">Zinc</keyword>
<sequence length="349" mass="39124">MDLIAEPNLKELINSTTHKWIFVGGKGGVGKTTSSCSISIQMALAQPKKQFLLISTDPAHNLSDAFGEKFGKDARKVTGMDNLSCMEIDPSAALKDMNDMSVAQNDKNDGFSDLLQGGGLAELTGSIPGIDEALSFMEVMKHIKRQEEGEGEKYDTVIFDTAPTGHTLRFLQLPQTLSQLLQKFGEIAGRFGPMLNSLTGGGQNMDIMGKVDELKANVEKIREQFTNPDMTTFVCVCISEFLSLYETERLIQELMSYEMDVNSIIVNQLLFADDDAEHNCRRCQARWNMQKKYLDQIGELYDDFHVVKMPLCAGEIRGLNNLKKFSQFLNKEYDPVADNKIIYELEEQK</sequence>